<comment type="function">
    <text evidence="2">Proton pump that utilizes the energy of pyrophosphate hydrolysis as the driving force for proton movement across the membrane. Generates a proton motive force.</text>
</comment>
<comment type="catalytic activity">
    <reaction evidence="2">
        <text>diphosphate + H2O + H(+)(in) = 2 phosphate + 2 H(+)(out)</text>
        <dbReference type="Rhea" id="RHEA:13973"/>
        <dbReference type="ChEBI" id="CHEBI:15377"/>
        <dbReference type="ChEBI" id="CHEBI:15378"/>
        <dbReference type="ChEBI" id="CHEBI:33019"/>
        <dbReference type="ChEBI" id="CHEBI:43474"/>
        <dbReference type="EC" id="7.1.3.1"/>
    </reaction>
</comment>
<comment type="cofactor">
    <cofactor evidence="2">
        <name>Mg(2+)</name>
        <dbReference type="ChEBI" id="CHEBI:18420"/>
    </cofactor>
</comment>
<comment type="subunit">
    <text evidence="2">Homodimer.</text>
</comment>
<comment type="subcellular location">
    <subcellularLocation>
        <location evidence="2">Cell inner membrane</location>
        <topology evidence="2">Multi-pass membrane protein</topology>
    </subcellularLocation>
</comment>
<comment type="similarity">
    <text evidence="2">Belongs to the H(+)-translocating pyrophosphatase (TC 3.A.10) family. K(+)-insensitive subfamily.</text>
</comment>
<evidence type="ECO:0000250" key="1"/>
<evidence type="ECO:0000255" key="2">
    <source>
        <dbReference type="HAMAP-Rule" id="MF_01129"/>
    </source>
</evidence>
<evidence type="ECO:0000305" key="3"/>
<accession>Q8VRZ2</accession>
<accession>A6X1Y3</accession>
<sequence length="718" mass="73272">MQMGVAVLVLVIACGVVSVLFAIWAIRSVLAADQGTQRMQEIAEAIREGASAYLTRQYSTIAIVGVVVFLAAWYLLSISAAIGFLIGAVLSGVTGFIGMHVSVRANVRTAQAASLSLAGGLELAFKSGAITGLLVAGLALLGVSVYYFILTVWLGYSPSDRTVIDALVSLGFGASLISIFARLGGGIFTKGADVGGDLVGKVEAGIPEDDPRNPATIADNVGDNVGDCAGMAADLFETYAVTVVATMVLGAIFFNGSDILSSVMLYPLMICGACVITSIVGTFFVKLGVNGSIMGALYKGLIATGLLSIVGLAIANTLTVGWGEIGTVAGKSITGTNLFLCGLIGLIVTGLIVVITEYYTGTNKRPVNSIAQASVTGHGTNVIQGLAVSLESTALPAIVIVGGIISTYQLAGLFGTAIAVTAMLGIAGMIVALDAFGPVTDNAGGIAEMAGLDPEVRKATDALDAVGNTTKAVTKGYAIGSAGLGALVLFAAYSNDLAYFAANGQTYPYFADMGPVSFDLSNPYVVAGLIFGGLIPYLFGGMAMTAVGRAGGAVVQEVRRQFREKPGIMTGKERPDYARAVDLLTRAAIREMIIPSLLPVLAPIVVYFGVLLISGSKAAAFAALGASLLGVIVNGLFVAISMTSGGGAWDNAKKSFEDGFTDADGVKHLKGSEAHKASVTGDTVGDPYKDTAGPAVNPAIKITNIVALLLLAVLAHMS</sequence>
<proteinExistence type="inferred from homology"/>
<dbReference type="EC" id="7.1.3.1" evidence="2"/>
<dbReference type="EMBL" id="CP000758">
    <property type="protein sequence ID" value="ABS15237.1"/>
    <property type="molecule type" value="Genomic_DNA"/>
</dbReference>
<dbReference type="EMBL" id="AF417514">
    <property type="protein sequence ID" value="AAL69330.1"/>
    <property type="molecule type" value="Genomic_DNA"/>
</dbReference>
<dbReference type="RefSeq" id="WP_012092338.1">
    <property type="nucleotide sequence ID" value="NC_009667.1"/>
</dbReference>
<dbReference type="SMR" id="Q8VRZ2"/>
<dbReference type="STRING" id="439375.Oant_2524"/>
<dbReference type="KEGG" id="oan:Oant_2524"/>
<dbReference type="PATRIC" id="fig|439375.7.peg.2657"/>
<dbReference type="eggNOG" id="COG3808">
    <property type="taxonomic scope" value="Bacteria"/>
</dbReference>
<dbReference type="HOGENOM" id="CLU_008743_3_1_5"/>
<dbReference type="PhylomeDB" id="Q8VRZ2"/>
<dbReference type="Proteomes" id="UP000002301">
    <property type="component" value="Chromosome 1"/>
</dbReference>
<dbReference type="GO" id="GO:0005886">
    <property type="term" value="C:plasma membrane"/>
    <property type="evidence" value="ECO:0007669"/>
    <property type="project" value="UniProtKB-SubCell"/>
</dbReference>
<dbReference type="GO" id="GO:0009678">
    <property type="term" value="F:diphosphate hydrolysis-driven proton transmembrane transporter activity"/>
    <property type="evidence" value="ECO:0007669"/>
    <property type="project" value="UniProtKB-UniRule"/>
</dbReference>
<dbReference type="GO" id="GO:0004427">
    <property type="term" value="F:inorganic diphosphate phosphatase activity"/>
    <property type="evidence" value="ECO:0007669"/>
    <property type="project" value="UniProtKB-UniRule"/>
</dbReference>
<dbReference type="GO" id="GO:0000287">
    <property type="term" value="F:magnesium ion binding"/>
    <property type="evidence" value="ECO:0007669"/>
    <property type="project" value="UniProtKB-UniRule"/>
</dbReference>
<dbReference type="HAMAP" id="MF_01129">
    <property type="entry name" value="PPase_energized_pump"/>
    <property type="match status" value="1"/>
</dbReference>
<dbReference type="InterPro" id="IPR004131">
    <property type="entry name" value="PPase-energised_H-pump"/>
</dbReference>
<dbReference type="NCBIfam" id="NF001951">
    <property type="entry name" value="PRK00733.1-2"/>
    <property type="match status" value="1"/>
</dbReference>
<dbReference type="NCBIfam" id="NF001960">
    <property type="entry name" value="PRK00733.3-5"/>
    <property type="match status" value="1"/>
</dbReference>
<dbReference type="NCBIfam" id="TIGR01104">
    <property type="entry name" value="V_PPase"/>
    <property type="match status" value="1"/>
</dbReference>
<dbReference type="PANTHER" id="PTHR31998">
    <property type="entry name" value="K(+)-INSENSITIVE PYROPHOSPHATE-ENERGIZED PROTON PUMP"/>
    <property type="match status" value="1"/>
</dbReference>
<dbReference type="Pfam" id="PF03030">
    <property type="entry name" value="H_PPase"/>
    <property type="match status" value="1"/>
</dbReference>
<dbReference type="PIRSF" id="PIRSF001265">
    <property type="entry name" value="H+-PPase"/>
    <property type="match status" value="1"/>
</dbReference>
<gene>
    <name evidence="2" type="primary">hppA</name>
    <name type="ordered locus">Oant_2524</name>
</gene>
<reference key="1">
    <citation type="journal article" date="2011" name="J. Bacteriol.">
        <title>Genome of Ochrobactrum anthropi ATCC 49188 T, a versatile opportunistic pathogen and symbiont of several eukaryotic hosts.</title>
        <authorList>
            <person name="Chain P.S."/>
            <person name="Lang D.M."/>
            <person name="Comerci D.J."/>
            <person name="Malfatti S.A."/>
            <person name="Vergez L.M."/>
            <person name="Shin M."/>
            <person name="Ugalde R.A."/>
            <person name="Garcia E."/>
            <person name="Tolmasky M.E."/>
        </authorList>
    </citation>
    <scope>NUCLEOTIDE SEQUENCE [LARGE SCALE GENOMIC DNA]</scope>
    <source>
        <strain>ATCC 49188 / DSM 6882 / CCUG 24695 / JCM 21032 / LMG 3331 / NBRC 15819 / NCTC 12168 / Alc 37</strain>
    </source>
</reference>
<reference key="2">
    <citation type="submission" date="2001-09" db="EMBL/GenBank/DDBJ databases">
        <title>High prevalence of the H+ proton-pumping inorganic pyrophosphatase gene in alpha proteobacteria and evidence of lateral transfer in its phylogeny.</title>
        <authorList>
            <person name="Jumas-Bilak E."/>
            <person name="Michaux-Charachon S."/>
            <person name="Teyssier C."/>
        </authorList>
    </citation>
    <scope>NUCLEOTIDE SEQUENCE [GENOMIC DNA] OF 242-455</scope>
</reference>
<name>HPPA_BRUA4</name>
<feature type="chain" id="PRO_0000217023" description="K(+)-insensitive pyrophosphate-energized proton pump">
    <location>
        <begin position="1"/>
        <end position="718"/>
    </location>
</feature>
<feature type="transmembrane region" description="Helical" evidence="2">
    <location>
        <begin position="6"/>
        <end position="26"/>
    </location>
</feature>
<feature type="transmembrane region" description="Helical" evidence="2">
    <location>
        <begin position="54"/>
        <end position="76"/>
    </location>
</feature>
<feature type="transmembrane region" description="Helical" evidence="2">
    <location>
        <begin position="81"/>
        <end position="103"/>
    </location>
</feature>
<feature type="transmembrane region" description="Helical" evidence="2">
    <location>
        <begin position="112"/>
        <end position="132"/>
    </location>
</feature>
<feature type="transmembrane region" description="Helical" evidence="2">
    <location>
        <begin position="133"/>
        <end position="153"/>
    </location>
</feature>
<feature type="transmembrane region" description="Helical" evidence="2">
    <location>
        <begin position="168"/>
        <end position="188"/>
    </location>
</feature>
<feature type="transmembrane region" description="Helical" evidence="2">
    <location>
        <begin position="240"/>
        <end position="260"/>
    </location>
</feature>
<feature type="transmembrane region" description="Helical" evidence="2">
    <location>
        <begin position="265"/>
        <end position="285"/>
    </location>
</feature>
<feature type="transmembrane region" description="Helical" evidence="2">
    <location>
        <begin position="300"/>
        <end position="320"/>
    </location>
</feature>
<feature type="transmembrane region" description="Helical" evidence="2">
    <location>
        <begin position="335"/>
        <end position="355"/>
    </location>
</feature>
<feature type="transmembrane region" description="Helical" evidence="2">
    <location>
        <begin position="385"/>
        <end position="405"/>
    </location>
</feature>
<feature type="transmembrane region" description="Helical" evidence="2">
    <location>
        <begin position="413"/>
        <end position="433"/>
    </location>
</feature>
<feature type="transmembrane region" description="Helical" evidence="2">
    <location>
        <begin position="472"/>
        <end position="492"/>
    </location>
</feature>
<feature type="transmembrane region" description="Helical" evidence="2">
    <location>
        <begin position="524"/>
        <end position="544"/>
    </location>
</feature>
<feature type="transmembrane region" description="Helical" evidence="2">
    <location>
        <begin position="593"/>
        <end position="613"/>
    </location>
</feature>
<feature type="transmembrane region" description="Helical" evidence="2">
    <location>
        <begin position="620"/>
        <end position="640"/>
    </location>
</feature>
<feature type="transmembrane region" description="Helical" evidence="2">
    <location>
        <begin position="695"/>
        <end position="715"/>
    </location>
</feature>
<feature type="binding site" evidence="1">
    <location>
        <position position="190"/>
    </location>
    <ligand>
        <name>substrate</name>
    </ligand>
</feature>
<feature type="binding site" evidence="1">
    <location>
        <position position="193"/>
    </location>
    <ligand>
        <name>Mg(2+)</name>
        <dbReference type="ChEBI" id="CHEBI:18420"/>
        <label>1</label>
    </ligand>
</feature>
<feature type="binding site" evidence="1">
    <location>
        <position position="197"/>
    </location>
    <ligand>
        <name>Mg(2+)</name>
        <dbReference type="ChEBI" id="CHEBI:18420"/>
        <label>1</label>
    </ligand>
</feature>
<feature type="binding site" evidence="1">
    <location>
        <position position="220"/>
    </location>
    <ligand>
        <name>Mg(2+)</name>
        <dbReference type="ChEBI" id="CHEBI:18420"/>
        <label>2</label>
    </ligand>
</feature>
<feature type="binding site" evidence="1">
    <location>
        <position position="223"/>
    </location>
    <ligand>
        <name>Mg(2+)</name>
        <dbReference type="ChEBI" id="CHEBI:18420"/>
        <label>2</label>
    </ligand>
</feature>
<feature type="binding site" evidence="1">
    <location>
        <position position="441"/>
    </location>
    <ligand>
        <name>Mg(2+)</name>
        <dbReference type="ChEBI" id="CHEBI:18420"/>
        <label>2</label>
    </ligand>
</feature>
<feature type="binding site" evidence="1">
    <location>
        <position position="650"/>
    </location>
    <ligand>
        <name>Ca(2+)</name>
        <dbReference type="ChEBI" id="CHEBI:29108"/>
    </ligand>
</feature>
<feature type="binding site" evidence="1">
    <location>
        <position position="682"/>
    </location>
    <ligand>
        <name>Ca(2+)</name>
        <dbReference type="ChEBI" id="CHEBI:29108"/>
    </ligand>
</feature>
<feature type="binding site" evidence="1">
    <location>
        <position position="686"/>
    </location>
    <ligand>
        <name>Ca(2+)</name>
        <dbReference type="ChEBI" id="CHEBI:29108"/>
    </ligand>
</feature>
<feature type="binding site" evidence="1">
    <location>
        <position position="689"/>
    </location>
    <ligand>
        <name>substrate</name>
    </ligand>
</feature>
<feature type="site" description="Important for ion transport" evidence="1">
    <location>
        <position position="182"/>
    </location>
</feature>
<feature type="site" description="Important for ion transport" evidence="1">
    <location>
        <position position="227"/>
    </location>
</feature>
<feature type="site" description="Important for ion transport" evidence="1">
    <location>
        <position position="234"/>
    </location>
</feature>
<feature type="site" description="Determinant of potassium independence" evidence="2">
    <location>
        <position position="471"/>
    </location>
</feature>
<feature type="site" description="Important for ion transport" evidence="1">
    <location>
        <position position="690"/>
    </location>
</feature>
<feature type="site" description="Important for ion transport" evidence="1">
    <location>
        <position position="701"/>
    </location>
</feature>
<feature type="sequence conflict" description="In Ref. 2; AAL69330." evidence="3" ref="2">
    <original>I</original>
    <variation>V</variation>
    <location>
        <position position="259"/>
    </location>
</feature>
<feature type="sequence conflict" description="In Ref. 2; AAL69330." evidence="3" ref="2">
    <original>GVN</original>
    <variation>SVD</variation>
    <location>
        <begin position="288"/>
        <end position="290"/>
    </location>
</feature>
<feature type="sequence conflict" description="In Ref. 2; AAL69330." evidence="3" ref="2">
    <original>I</original>
    <variation>V</variation>
    <location>
        <position position="314"/>
    </location>
</feature>
<feature type="sequence conflict" description="In Ref. 2; AAL69330." evidence="3" ref="2">
    <original>V</original>
    <variation>I</variation>
    <location>
        <position position="320"/>
    </location>
</feature>
<feature type="sequence conflict" description="In Ref. 2; AAL69330." evidence="3" ref="2">
    <original>L</original>
    <variation>I</variation>
    <location>
        <position position="340"/>
    </location>
</feature>
<protein>
    <recommendedName>
        <fullName evidence="2">K(+)-insensitive pyrophosphate-energized proton pump</fullName>
        <ecNumber evidence="2">7.1.3.1</ecNumber>
    </recommendedName>
    <alternativeName>
        <fullName evidence="2">Membrane-bound proton-translocating pyrophosphatase</fullName>
    </alternativeName>
    <alternativeName>
        <fullName evidence="2">Pyrophosphate-energized inorganic pyrophosphatase</fullName>
        <shortName evidence="2">H(+)-PPase</shortName>
    </alternativeName>
</protein>
<organism>
    <name type="scientific">Brucella anthropi (strain ATCC 49188 / DSM 6882 / CCUG 24695 / JCM 21032 / LMG 3331 / NBRC 15819 / NCTC 12168 / Alc 37)</name>
    <name type="common">Ochrobactrum anthropi</name>
    <dbReference type="NCBI Taxonomy" id="439375"/>
    <lineage>
        <taxon>Bacteria</taxon>
        <taxon>Pseudomonadati</taxon>
        <taxon>Pseudomonadota</taxon>
        <taxon>Alphaproteobacteria</taxon>
        <taxon>Hyphomicrobiales</taxon>
        <taxon>Brucellaceae</taxon>
        <taxon>Brucella/Ochrobactrum group</taxon>
        <taxon>Brucella</taxon>
    </lineage>
</organism>
<keyword id="KW-0106">Calcium</keyword>
<keyword id="KW-0997">Cell inner membrane</keyword>
<keyword id="KW-1003">Cell membrane</keyword>
<keyword id="KW-0375">Hydrogen ion transport</keyword>
<keyword id="KW-0406">Ion transport</keyword>
<keyword id="KW-0460">Magnesium</keyword>
<keyword id="KW-0472">Membrane</keyword>
<keyword id="KW-0479">Metal-binding</keyword>
<keyword id="KW-1185">Reference proteome</keyword>
<keyword id="KW-1278">Translocase</keyword>
<keyword id="KW-0812">Transmembrane</keyword>
<keyword id="KW-1133">Transmembrane helix</keyword>
<keyword id="KW-0813">Transport</keyword>